<feature type="chain" id="PRO_0000193022" description="Anaerobic nitrite reductase NSHB2">
    <location>
        <begin position="1"/>
        <end position="169"/>
    </location>
</feature>
<feature type="domain" description="Globin" evidence="6">
    <location>
        <begin position="16"/>
        <end position="166"/>
    </location>
</feature>
<feature type="short sequence motif" description="Homodimerization" evidence="3">
    <location>
        <begin position="49"/>
        <end position="53"/>
    </location>
</feature>
<feature type="short sequence motif" description="Homodimerization" evidence="3">
    <location>
        <begin position="119"/>
        <end position="131"/>
    </location>
</feature>
<feature type="binding site" evidence="4">
    <location>
        <position position="59"/>
    </location>
    <ligand>
        <name>heme b</name>
        <dbReference type="ChEBI" id="CHEBI:60344"/>
    </ligand>
</feature>
<feature type="binding site" evidence="3">
    <location>
        <position position="73"/>
    </location>
    <ligand>
        <name>heme b</name>
        <dbReference type="ChEBI" id="CHEBI:60344"/>
    </ligand>
</feature>
<feature type="binding site" description="distal binding residue" evidence="6">
    <location>
        <position position="77"/>
    </location>
    <ligand>
        <name>heme b</name>
        <dbReference type="ChEBI" id="CHEBI:60344"/>
    </ligand>
    <ligandPart>
        <name>Fe</name>
        <dbReference type="ChEBI" id="CHEBI:18248"/>
    </ligandPart>
</feature>
<feature type="binding site" evidence="3">
    <location>
        <position position="107"/>
    </location>
    <ligand>
        <name>heme b</name>
        <dbReference type="ChEBI" id="CHEBI:60344"/>
    </ligand>
</feature>
<feature type="binding site" evidence="3">
    <location>
        <position position="111"/>
    </location>
    <ligand>
        <name>heme b</name>
        <dbReference type="ChEBI" id="CHEBI:60344"/>
    </ligand>
</feature>
<feature type="binding site" description="proximal binding residue" evidence="6">
    <location>
        <position position="112"/>
    </location>
    <ligand>
        <name>heme b</name>
        <dbReference type="ChEBI" id="CHEBI:60344"/>
    </ligand>
    <ligandPart>
        <name>Fe</name>
        <dbReference type="ChEBI" id="CHEBI:18248"/>
    </ligandPart>
</feature>
<feature type="site" description="Homodimerization" evidence="3">
    <location>
        <position position="147"/>
    </location>
</feature>
<name>NSHB2_ORYSJ</name>
<reference key="1">
    <citation type="journal article" date="1997" name="Plant Physiol.">
        <title>Rice hemoglobins. Gene cloning, analysis, and O2-binding kinetics of a recombinant protein synthesized in Escherichia coli.</title>
        <authorList>
            <person name="Arredondo-Peter R."/>
            <person name="Hargrove M.S."/>
            <person name="Sarath G."/>
            <person name="Moran J.F."/>
            <person name="Lohrman J."/>
            <person name="Olson J.S."/>
            <person name="Klucas R.V."/>
        </authorList>
    </citation>
    <scope>NUCLEOTIDE SEQUENCE [GENOMIC DNA / MRNA]</scope>
    <scope>FUNCTION</scope>
    <scope>TISSUE SPECIFICITY</scope>
    <source>
        <strain>cv. Jackson</strain>
    </source>
</reference>
<reference key="2">
    <citation type="journal article" date="2002" name="Plant Physiol. Biochem.">
        <title>Mapping and analysis of a hemoglobin gene family from rice (Oryza sativa).</title>
        <authorList>
            <person name="Lira-Ruan V."/>
            <person name="Ross E.J.H."/>
            <person name="Sarath G."/>
            <person name="Klucas R.V."/>
            <person name="Arredondo-Peter R."/>
        </authorList>
    </citation>
    <scope>NUCLEOTIDE SEQUENCE [GENOMIC DNA]</scope>
    <source>
        <strain>cv. Nipponbare</strain>
    </source>
</reference>
<reference key="3">
    <citation type="journal article" date="2005" name="Genome Res.">
        <title>Sequence, annotation, and analysis of synteny between rice chromosome 3 and diverged grass species.</title>
        <authorList>
            <consortium name="The rice chromosome 3 sequencing consortium"/>
            <person name="Buell C.R."/>
            <person name="Yuan Q."/>
            <person name="Ouyang S."/>
            <person name="Liu J."/>
            <person name="Zhu W."/>
            <person name="Wang A."/>
            <person name="Maiti R."/>
            <person name="Haas B."/>
            <person name="Wortman J."/>
            <person name="Pertea M."/>
            <person name="Jones K.M."/>
            <person name="Kim M."/>
            <person name="Overton L."/>
            <person name="Tsitrin T."/>
            <person name="Fadrosh D."/>
            <person name="Bera J."/>
            <person name="Weaver B."/>
            <person name="Jin S."/>
            <person name="Johri S."/>
            <person name="Reardon M."/>
            <person name="Webb K."/>
            <person name="Hill J."/>
            <person name="Moffat K."/>
            <person name="Tallon L."/>
            <person name="Van Aken S."/>
            <person name="Lewis M."/>
            <person name="Utterback T."/>
            <person name="Feldblyum T."/>
            <person name="Zismann V."/>
            <person name="Iobst S."/>
            <person name="Hsiao J."/>
            <person name="de Vazeille A.R."/>
            <person name="Salzberg S.L."/>
            <person name="White O."/>
            <person name="Fraser C.M."/>
            <person name="Yu Y."/>
            <person name="Kim H."/>
            <person name="Rambo T."/>
            <person name="Currie J."/>
            <person name="Collura K."/>
            <person name="Kernodle-Thompson S."/>
            <person name="Wei F."/>
            <person name="Kudrna K."/>
            <person name="Ammiraju J.S.S."/>
            <person name="Luo M."/>
            <person name="Goicoechea J.L."/>
            <person name="Wing R.A."/>
            <person name="Henry D."/>
            <person name="Oates R."/>
            <person name="Palmer M."/>
            <person name="Pries G."/>
            <person name="Saski C."/>
            <person name="Simmons J."/>
            <person name="Soderlund C."/>
            <person name="Nelson W."/>
            <person name="de la Bastide M."/>
            <person name="Spiegel L."/>
            <person name="Nascimento L."/>
            <person name="Huang E."/>
            <person name="Preston R."/>
            <person name="Zutavern T."/>
            <person name="Palmer L."/>
            <person name="O'Shaughnessy A."/>
            <person name="Dike S."/>
            <person name="McCombie W.R."/>
            <person name="Minx P."/>
            <person name="Cordum H."/>
            <person name="Wilson R."/>
            <person name="Jin W."/>
            <person name="Lee H.R."/>
            <person name="Jiang J."/>
            <person name="Jackson S."/>
        </authorList>
    </citation>
    <scope>NUCLEOTIDE SEQUENCE [LARGE SCALE GENOMIC DNA]</scope>
    <source>
        <strain>cv. Nipponbare</strain>
    </source>
</reference>
<reference key="4">
    <citation type="journal article" date="2005" name="Nature">
        <title>The map-based sequence of the rice genome.</title>
        <authorList>
            <consortium name="International rice genome sequencing project (IRGSP)"/>
        </authorList>
    </citation>
    <scope>NUCLEOTIDE SEQUENCE [LARGE SCALE GENOMIC DNA]</scope>
    <source>
        <strain>cv. Nipponbare</strain>
    </source>
</reference>
<reference key="5">
    <citation type="journal article" date="2008" name="Nucleic Acids Res.">
        <title>The rice annotation project database (RAP-DB): 2008 update.</title>
        <authorList>
            <consortium name="The rice annotation project (RAP)"/>
        </authorList>
    </citation>
    <scope>GENOME REANNOTATION</scope>
    <source>
        <strain>cv. Nipponbare</strain>
    </source>
</reference>
<reference key="6">
    <citation type="journal article" date="2013" name="Rice">
        <title>Improvement of the Oryza sativa Nipponbare reference genome using next generation sequence and optical map data.</title>
        <authorList>
            <person name="Kawahara Y."/>
            <person name="de la Bastide M."/>
            <person name="Hamilton J.P."/>
            <person name="Kanamori H."/>
            <person name="McCombie W.R."/>
            <person name="Ouyang S."/>
            <person name="Schwartz D.C."/>
            <person name="Tanaka T."/>
            <person name="Wu J."/>
            <person name="Zhou S."/>
            <person name="Childs K.L."/>
            <person name="Davidson R.M."/>
            <person name="Lin H."/>
            <person name="Quesada-Ocampo L."/>
            <person name="Vaillancourt B."/>
            <person name="Sakai H."/>
            <person name="Lee S.S."/>
            <person name="Kim J."/>
            <person name="Numa H."/>
            <person name="Itoh T."/>
            <person name="Buell C.R."/>
            <person name="Matsumoto T."/>
        </authorList>
    </citation>
    <scope>GENOME REANNOTATION</scope>
    <source>
        <strain>cv. Nipponbare</strain>
    </source>
</reference>
<reference key="7">
    <citation type="journal article" date="2005" name="PLoS Biol.">
        <title>The genomes of Oryza sativa: a history of duplications.</title>
        <authorList>
            <person name="Yu J."/>
            <person name="Wang J."/>
            <person name="Lin W."/>
            <person name="Li S."/>
            <person name="Li H."/>
            <person name="Zhou J."/>
            <person name="Ni P."/>
            <person name="Dong W."/>
            <person name="Hu S."/>
            <person name="Zeng C."/>
            <person name="Zhang J."/>
            <person name="Zhang Y."/>
            <person name="Li R."/>
            <person name="Xu Z."/>
            <person name="Li S."/>
            <person name="Li X."/>
            <person name="Zheng H."/>
            <person name="Cong L."/>
            <person name="Lin L."/>
            <person name="Yin J."/>
            <person name="Geng J."/>
            <person name="Li G."/>
            <person name="Shi J."/>
            <person name="Liu J."/>
            <person name="Lv H."/>
            <person name="Li J."/>
            <person name="Wang J."/>
            <person name="Deng Y."/>
            <person name="Ran L."/>
            <person name="Shi X."/>
            <person name="Wang X."/>
            <person name="Wu Q."/>
            <person name="Li C."/>
            <person name="Ren X."/>
            <person name="Wang J."/>
            <person name="Wang X."/>
            <person name="Li D."/>
            <person name="Liu D."/>
            <person name="Zhang X."/>
            <person name="Ji Z."/>
            <person name="Zhao W."/>
            <person name="Sun Y."/>
            <person name="Zhang Z."/>
            <person name="Bao J."/>
            <person name="Han Y."/>
            <person name="Dong L."/>
            <person name="Ji J."/>
            <person name="Chen P."/>
            <person name="Wu S."/>
            <person name="Liu J."/>
            <person name="Xiao Y."/>
            <person name="Bu D."/>
            <person name="Tan J."/>
            <person name="Yang L."/>
            <person name="Ye C."/>
            <person name="Zhang J."/>
            <person name="Xu J."/>
            <person name="Zhou Y."/>
            <person name="Yu Y."/>
            <person name="Zhang B."/>
            <person name="Zhuang S."/>
            <person name="Wei H."/>
            <person name="Liu B."/>
            <person name="Lei M."/>
            <person name="Yu H."/>
            <person name="Li Y."/>
            <person name="Xu H."/>
            <person name="Wei S."/>
            <person name="He X."/>
            <person name="Fang L."/>
            <person name="Zhang Z."/>
            <person name="Zhang Y."/>
            <person name="Huang X."/>
            <person name="Su Z."/>
            <person name="Tong W."/>
            <person name="Li J."/>
            <person name="Tong Z."/>
            <person name="Li S."/>
            <person name="Ye J."/>
            <person name="Wang L."/>
            <person name="Fang L."/>
            <person name="Lei T."/>
            <person name="Chen C.-S."/>
            <person name="Chen H.-C."/>
            <person name="Xu Z."/>
            <person name="Li H."/>
            <person name="Huang H."/>
            <person name="Zhang F."/>
            <person name="Xu H."/>
            <person name="Li N."/>
            <person name="Zhao C."/>
            <person name="Li S."/>
            <person name="Dong L."/>
            <person name="Huang Y."/>
            <person name="Li L."/>
            <person name="Xi Y."/>
            <person name="Qi Q."/>
            <person name="Li W."/>
            <person name="Zhang B."/>
            <person name="Hu W."/>
            <person name="Zhang Y."/>
            <person name="Tian X."/>
            <person name="Jiao Y."/>
            <person name="Liang X."/>
            <person name="Jin J."/>
            <person name="Gao L."/>
            <person name="Zheng W."/>
            <person name="Hao B."/>
            <person name="Liu S.-M."/>
            <person name="Wang W."/>
            <person name="Yuan L."/>
            <person name="Cao M."/>
            <person name="McDermott J."/>
            <person name="Samudrala R."/>
            <person name="Wang J."/>
            <person name="Wong G.K.-S."/>
            <person name="Yang H."/>
        </authorList>
    </citation>
    <scope>NUCLEOTIDE SEQUENCE [LARGE SCALE GENOMIC DNA]</scope>
    <source>
        <strain>cv. Nipponbare</strain>
    </source>
</reference>
<reference key="8">
    <citation type="journal article" date="2003" name="Science">
        <title>Collection, mapping, and annotation of over 28,000 cDNA clones from japonica rice.</title>
        <authorList>
            <consortium name="The rice full-length cDNA consortium"/>
        </authorList>
    </citation>
    <scope>NUCLEOTIDE SEQUENCE [LARGE SCALE MRNA]</scope>
    <source>
        <strain>cv. Nipponbare</strain>
    </source>
</reference>
<reference key="9">
    <citation type="journal article" date="2001" name="Plant Sci.">
        <title>Synthesis of hemoglobins in rice (Oryza sativa var. Jackson) plants growing in normal and stress conditions.</title>
        <authorList>
            <person name="Lira-Ruan V."/>
            <person name="Sarath G."/>
            <person name="Klucas R.V."/>
            <person name="Arredondo-Peter R."/>
        </authorList>
    </citation>
    <scope>INDUCTION</scope>
    <source>
        <strain>cv. Jackson</strain>
    </source>
</reference>
<reference key="10">
    <citation type="journal article" date="2005" name="Plant Cell Physiol.">
        <title>Induction of class-1 non-symbiotic hemoglobin genes by nitrate, nitrite and nitric oxide in cultured rice cells.</title>
        <authorList>
            <person name="Ohwaki Y."/>
            <person name="Kawagishi-Kobayashi M."/>
            <person name="Wakasa K."/>
            <person name="Fujihara S."/>
            <person name="Yoneyama T."/>
        </authorList>
    </citation>
    <scope>INDUCTION BY NITRATE; NITRITE AND NITRIC OXIDE DONORS</scope>
    <source>
        <strain>cv. Nipponbare</strain>
    </source>
</reference>
<reference key="11">
    <citation type="journal article" date="2007" name="Gene">
        <title>Plant hemoglobins: what we know six decades after their discovery.</title>
        <authorList>
            <person name="Garrocho-Villegas V."/>
            <person name="Gopalasubramaniam S.K."/>
            <person name="Arredondo-Peter R."/>
        </authorList>
    </citation>
    <scope>REVIEW</scope>
</reference>
<reference key="12">
    <citation type="journal article" date="2008" name="Plant Physiol. Biochem.">
        <title>Expression and in silico structural analysis of a rice (Oryza sativa) hemoglobin 5.</title>
        <authorList>
            <person name="Garrocho-Villegas V."/>
            <person name="Bustos-Rivera G."/>
            <person name="Gough J."/>
            <person name="Vinogradov S.N."/>
            <person name="Arredondo-Peter R."/>
        </authorList>
    </citation>
    <scope>GENE FAMILY</scope>
    <source>
        <strain>cv. Morelos</strain>
    </source>
</reference>
<reference key="13">
    <citation type="journal article" date="2011" name="Commun. Integr. Biol.">
        <title>Expression of non-symbiotic hemoglobin 1 and 2 genes in rice (Oryza sativa) embryonic organs.</title>
        <authorList>
            <person name="Lira-Ruan V."/>
            <person name="Ruiz-Kubli M."/>
            <person name="Arredondo-Peter R."/>
        </authorList>
    </citation>
    <scope>TISSUE SPECIFICITY</scope>
</reference>
<proteinExistence type="evidence at transcript level"/>
<sequence length="169" mass="18616">MALVEGNNGVSGGAVSFSEEQEALVLKSWAIMKKDSANIGLRFFLKIFEVAPSASQMFSFLRNSDVPLEKNPKLKTHAMSVFVMTCEAAAQLRKAGKVTVRDTTLKRLGATHFKYGVGDAHFEVTRFALLETIKEAVPVDMWSPAMKSAWSEAYNQLVAAIKQEMKPAE</sequence>
<comment type="function">
    <text evidence="1 3 5">Phytoglobin that reduces nitrite to nitric oxide under anoxic conditions (e.g. during flooding or in waterlogged soil) (By similarity). May not function as an oxygen storage or transport protein (By similarity). Has an unusually high affinity for O(2) through an hexacoordinate heme iron because of a very low dissociation constant (By similarity). Promotes tolerance to low potassium K(+) conditions (By similarity).</text>
</comment>
<comment type="catalytic activity">
    <reaction evidence="3">
        <text>Fe(III)-heme b-[protein] + nitric oxide + H2O = Fe(II)-heme b-[protein] + nitrite + 2 H(+)</text>
        <dbReference type="Rhea" id="RHEA:77711"/>
        <dbReference type="Rhea" id="RHEA-COMP:18975"/>
        <dbReference type="Rhea" id="RHEA-COMP:18976"/>
        <dbReference type="ChEBI" id="CHEBI:15377"/>
        <dbReference type="ChEBI" id="CHEBI:15378"/>
        <dbReference type="ChEBI" id="CHEBI:16301"/>
        <dbReference type="ChEBI" id="CHEBI:16480"/>
        <dbReference type="ChEBI" id="CHEBI:55376"/>
        <dbReference type="ChEBI" id="CHEBI:60344"/>
    </reaction>
    <physiologicalReaction direction="right-to-left" evidence="3">
        <dbReference type="Rhea" id="RHEA:77713"/>
    </physiologicalReaction>
</comment>
<comment type="cofactor">
    <cofactor evidence="4">
        <name>heme b</name>
        <dbReference type="ChEBI" id="CHEBI:60344"/>
    </cofactor>
    <text evidence="4">Binds 1 heme group per subunit.</text>
</comment>
<comment type="subunit">
    <text evidence="3">Homodimer.</text>
</comment>
<comment type="subcellular location">
    <subcellularLocation>
        <location evidence="2">Cytoplasm</location>
    </subcellularLocation>
    <subcellularLocation>
        <location evidence="2">Nucleus</location>
    </subcellularLocation>
</comment>
<comment type="tissue specificity">
    <text evidence="9 10">Expressed in leaves, but not in roots (PubMed:9390447). Present in embryonic organs including embryos, coleoptiles and seminal roots (PubMed:21966570).</text>
</comment>
<comment type="induction">
    <text evidence="7 8">By flooding and etiolating but not by oxidative, nitrosative or hormonal stresses (PubMed:11448759). Strong, rapid and transient induction by nitrate NO(3)(-), nitrite NO(2)(-) and nitric oxide (NO) donors, such as S-nitroso-N-acetylpenicillamine (SNAP) and sodium nitroprusside (SNP) (PubMed:15695464).</text>
</comment>
<comment type="similarity">
    <text evidence="14">Belongs to the plant globin family.</text>
</comment>
<evidence type="ECO:0000250" key="1">
    <source>
        <dbReference type="UniProtKB" id="A2XE45"/>
    </source>
</evidence>
<evidence type="ECO:0000250" key="2">
    <source>
        <dbReference type="UniProtKB" id="A2XE98"/>
    </source>
</evidence>
<evidence type="ECO:0000250" key="3">
    <source>
        <dbReference type="UniProtKB" id="O04986"/>
    </source>
</evidence>
<evidence type="ECO:0000250" key="4">
    <source>
        <dbReference type="UniProtKB" id="P68168"/>
    </source>
</evidence>
<evidence type="ECO:0000250" key="5">
    <source>
        <dbReference type="UniProtKB" id="Q42831"/>
    </source>
</evidence>
<evidence type="ECO:0000255" key="6">
    <source>
        <dbReference type="PROSITE-ProRule" id="PRU00238"/>
    </source>
</evidence>
<evidence type="ECO:0000269" key="7">
    <source>
    </source>
</evidence>
<evidence type="ECO:0000269" key="8">
    <source>
    </source>
</evidence>
<evidence type="ECO:0000269" key="9">
    <source>
    </source>
</evidence>
<evidence type="ECO:0000269" key="10">
    <source>
    </source>
</evidence>
<evidence type="ECO:0000303" key="11">
    <source>
    </source>
</evidence>
<evidence type="ECO:0000303" key="12">
    <source>
    </source>
</evidence>
<evidence type="ECO:0000303" key="13">
    <source>
    </source>
</evidence>
<evidence type="ECO:0000305" key="14"/>
<evidence type="ECO:0000312" key="15">
    <source>
        <dbReference type="EMBL" id="AAN52754.1"/>
    </source>
</evidence>
<evidence type="ECO:0000312" key="16">
    <source>
        <dbReference type="EMBL" id="EAZ26128.1"/>
    </source>
</evidence>
<gene>
    <name evidence="13" type="primary">NSHB2</name>
    <name evidence="11" type="synonym">GLB1B</name>
    <name evidence="13" type="synonym">HB2</name>
    <name evidence="12" type="synonym">Hb2-1</name>
    <name evidence="14" type="synonym">Pgb1.2</name>
    <name evidence="14" type="ordered locus">Os03g0226200</name>
    <name evidence="14" type="ordered locus">LOC_Os03g12510</name>
    <name evidence="16" type="ORF">OsJ_09991</name>
    <name evidence="15" type="ORF">OSJNBa0081P02.19</name>
</gene>
<organism>
    <name type="scientific">Oryza sativa subsp. japonica</name>
    <name type="common">Rice</name>
    <dbReference type="NCBI Taxonomy" id="39947"/>
    <lineage>
        <taxon>Eukaryota</taxon>
        <taxon>Viridiplantae</taxon>
        <taxon>Streptophyta</taxon>
        <taxon>Embryophyta</taxon>
        <taxon>Tracheophyta</taxon>
        <taxon>Spermatophyta</taxon>
        <taxon>Magnoliopsida</taxon>
        <taxon>Liliopsida</taxon>
        <taxon>Poales</taxon>
        <taxon>Poaceae</taxon>
        <taxon>BOP clade</taxon>
        <taxon>Oryzoideae</taxon>
        <taxon>Oryzeae</taxon>
        <taxon>Oryzinae</taxon>
        <taxon>Oryza</taxon>
        <taxon>Oryza sativa</taxon>
    </lineage>
</organism>
<dbReference type="EC" id="1.7.2.-" evidence="3"/>
<dbReference type="EMBL" id="U76028">
    <property type="protein sequence ID" value="AAC49881.1"/>
    <property type="molecule type" value="Genomic_DNA"/>
</dbReference>
<dbReference type="EMBL" id="U76031">
    <property type="protein sequence ID" value="AAC49884.1"/>
    <property type="molecule type" value="mRNA"/>
</dbReference>
<dbReference type="EMBL" id="AF335503">
    <property type="protein sequence ID" value="AAK72228.1"/>
    <property type="molecule type" value="Genomic_DNA"/>
</dbReference>
<dbReference type="EMBL" id="AC107226">
    <property type="protein sequence ID" value="AAN52754.1"/>
    <property type="molecule type" value="Genomic_DNA"/>
</dbReference>
<dbReference type="EMBL" id="DP000009">
    <property type="protein sequence ID" value="ABF94743.1"/>
    <property type="molecule type" value="Genomic_DNA"/>
</dbReference>
<dbReference type="EMBL" id="AP008209">
    <property type="protein sequence ID" value="BAF11351.1"/>
    <property type="molecule type" value="Genomic_DNA"/>
</dbReference>
<dbReference type="EMBL" id="AP014959">
    <property type="protein sequence ID" value="BAS83059.1"/>
    <property type="molecule type" value="Genomic_DNA"/>
</dbReference>
<dbReference type="EMBL" id="CM000140">
    <property type="protein sequence ID" value="EAZ26128.1"/>
    <property type="molecule type" value="Genomic_DNA"/>
</dbReference>
<dbReference type="EMBL" id="AK121522">
    <property type="protein sequence ID" value="BAH00533.1"/>
    <property type="molecule type" value="mRNA"/>
</dbReference>
<dbReference type="PIR" id="T04162">
    <property type="entry name" value="T04162"/>
</dbReference>
<dbReference type="RefSeq" id="NP_001404351.1">
    <property type="nucleotide sequence ID" value="NM_001417422.1"/>
</dbReference>
<dbReference type="RefSeq" id="XP_015628351.1">
    <property type="nucleotide sequence ID" value="XM_015772865.1"/>
</dbReference>
<dbReference type="SMR" id="O04985"/>
<dbReference type="FunCoup" id="O04985">
    <property type="interactions" value="1096"/>
</dbReference>
<dbReference type="STRING" id="39947.O04985"/>
<dbReference type="PaxDb" id="39947-O04985"/>
<dbReference type="EnsemblPlants" id="Os03t0226200-01">
    <property type="protein sequence ID" value="Os03t0226200-01"/>
    <property type="gene ID" value="Os03g0226200"/>
</dbReference>
<dbReference type="GeneID" id="4332123"/>
<dbReference type="Gramene" id="Os03t0226200-01">
    <property type="protein sequence ID" value="Os03t0226200-01"/>
    <property type="gene ID" value="Os03g0226200"/>
</dbReference>
<dbReference type="KEGG" id="dosa:Os03g0226200"/>
<dbReference type="eggNOG" id="KOG3378">
    <property type="taxonomic scope" value="Eukaryota"/>
</dbReference>
<dbReference type="HOGENOM" id="CLU_003827_11_2_1"/>
<dbReference type="InParanoid" id="O04985"/>
<dbReference type="OMA" id="HVMYSAK"/>
<dbReference type="OrthoDB" id="436496at2759"/>
<dbReference type="Proteomes" id="UP000000763">
    <property type="component" value="Chromosome 3"/>
</dbReference>
<dbReference type="Proteomes" id="UP000007752">
    <property type="component" value="Chromosome 3"/>
</dbReference>
<dbReference type="Proteomes" id="UP000059680">
    <property type="component" value="Chromosome 3"/>
</dbReference>
<dbReference type="GO" id="GO:0005737">
    <property type="term" value="C:cytoplasm"/>
    <property type="evidence" value="ECO:0000250"/>
    <property type="project" value="UniProtKB"/>
</dbReference>
<dbReference type="GO" id="GO:0005634">
    <property type="term" value="C:nucleus"/>
    <property type="evidence" value="ECO:0000250"/>
    <property type="project" value="UniProtKB"/>
</dbReference>
<dbReference type="GO" id="GO:0020037">
    <property type="term" value="F:heme binding"/>
    <property type="evidence" value="ECO:0007669"/>
    <property type="project" value="InterPro"/>
</dbReference>
<dbReference type="GO" id="GO:0046872">
    <property type="term" value="F:metal ion binding"/>
    <property type="evidence" value="ECO:0007669"/>
    <property type="project" value="UniProtKB-KW"/>
</dbReference>
<dbReference type="GO" id="GO:0016491">
    <property type="term" value="F:oxidoreductase activity"/>
    <property type="evidence" value="ECO:0007669"/>
    <property type="project" value="UniProtKB-KW"/>
</dbReference>
<dbReference type="GO" id="GO:0019825">
    <property type="term" value="F:oxygen binding"/>
    <property type="evidence" value="ECO:0007669"/>
    <property type="project" value="InterPro"/>
</dbReference>
<dbReference type="GO" id="GO:0051365">
    <property type="term" value="P:cellular response to potassium ion starvation"/>
    <property type="evidence" value="ECO:0000250"/>
    <property type="project" value="UniProtKB"/>
</dbReference>
<dbReference type="GO" id="GO:0010167">
    <property type="term" value="P:response to nitrate"/>
    <property type="evidence" value="ECO:0000270"/>
    <property type="project" value="UniProtKB"/>
</dbReference>
<dbReference type="GO" id="GO:0071731">
    <property type="term" value="P:response to nitric oxide"/>
    <property type="evidence" value="ECO:0000270"/>
    <property type="project" value="UniProtKB"/>
</dbReference>
<dbReference type="GO" id="GO:0080033">
    <property type="term" value="P:response to nitrite"/>
    <property type="evidence" value="ECO:0000270"/>
    <property type="project" value="UniProtKB"/>
</dbReference>
<dbReference type="CDD" id="cd14784">
    <property type="entry name" value="class1_nsHb-like"/>
    <property type="match status" value="1"/>
</dbReference>
<dbReference type="Gene3D" id="1.10.490.10">
    <property type="entry name" value="Globins"/>
    <property type="match status" value="1"/>
</dbReference>
<dbReference type="InterPro" id="IPR000971">
    <property type="entry name" value="Globin"/>
</dbReference>
<dbReference type="InterPro" id="IPR009050">
    <property type="entry name" value="Globin-like_sf"/>
</dbReference>
<dbReference type="InterPro" id="IPR012292">
    <property type="entry name" value="Globin/Proto"/>
</dbReference>
<dbReference type="InterPro" id="IPR001032">
    <property type="entry name" value="Leghaemoglobin-like"/>
</dbReference>
<dbReference type="InterPro" id="IPR019824">
    <property type="entry name" value="Leghaemoglobin_Fe_BS"/>
</dbReference>
<dbReference type="PANTHER" id="PTHR22924">
    <property type="entry name" value="LEGHEMOGLOBIN-RELATED"/>
    <property type="match status" value="1"/>
</dbReference>
<dbReference type="PANTHER" id="PTHR22924:SF98">
    <property type="entry name" value="NON-SYMBIOTIC HEMOGLOBIN 3"/>
    <property type="match status" value="1"/>
</dbReference>
<dbReference type="Pfam" id="PF00042">
    <property type="entry name" value="Globin"/>
    <property type="match status" value="1"/>
</dbReference>
<dbReference type="PRINTS" id="PR00188">
    <property type="entry name" value="PLANTGLOBIN"/>
</dbReference>
<dbReference type="SUPFAM" id="SSF46458">
    <property type="entry name" value="Globin-like"/>
    <property type="match status" value="1"/>
</dbReference>
<dbReference type="PROSITE" id="PS01033">
    <property type="entry name" value="GLOBIN"/>
    <property type="match status" value="1"/>
</dbReference>
<dbReference type="PROSITE" id="PS00208">
    <property type="entry name" value="PLANT_GLOBIN"/>
    <property type="match status" value="1"/>
</dbReference>
<keyword id="KW-0963">Cytoplasm</keyword>
<keyword id="KW-0349">Heme</keyword>
<keyword id="KW-0408">Iron</keyword>
<keyword id="KW-0479">Metal-binding</keyword>
<keyword id="KW-0539">Nucleus</keyword>
<keyword id="KW-0560">Oxidoreductase</keyword>
<keyword id="KW-1185">Reference proteome</keyword>
<keyword id="KW-0346">Stress response</keyword>
<protein>
    <recommendedName>
        <fullName evidence="14">Anaerobic nitrite reductase NSHB2</fullName>
        <ecNumber evidence="3">1.7.2.-</ecNumber>
    </recommendedName>
    <alternativeName>
        <fullName evidence="13">Non-symbiotic hemoglobin 2</fullName>
        <shortName evidence="14">OsNSHB2</shortName>
        <shortName evidence="12">nsHb2-1</shortName>
        <shortName evidence="13">rHb2</shortName>
    </alternativeName>
    <alternativeName>
        <fullName evidence="11">ORYsa GLB1b</fullName>
    </alternativeName>
    <alternativeName>
        <fullName evidence="14">Phytoglobin 1.2</fullName>
        <shortName evidence="14">OsPgb1.2</shortName>
        <shortName evidence="14">Phytogb1.2</shortName>
    </alternativeName>
</protein>
<accession>O04985</accession>
<accession>Q10PQ0</accession>
<accession>Q7G6W7</accession>